<reference key="1">
    <citation type="journal article" date="2011" name="J. Bacteriol.">
        <title>Comparative genomics of 28 Salmonella enterica isolates: evidence for CRISPR-mediated adaptive sublineage evolution.</title>
        <authorList>
            <person name="Fricke W.F."/>
            <person name="Mammel M.K."/>
            <person name="McDermott P.F."/>
            <person name="Tartera C."/>
            <person name="White D.G."/>
            <person name="Leclerc J.E."/>
            <person name="Ravel J."/>
            <person name="Cebula T.A."/>
        </authorList>
    </citation>
    <scope>NUCLEOTIDE SEQUENCE [LARGE SCALE GENOMIC DNA]</scope>
    <source>
        <strain>SL483</strain>
    </source>
</reference>
<name>IHFA_SALA4</name>
<organism>
    <name type="scientific">Salmonella agona (strain SL483)</name>
    <dbReference type="NCBI Taxonomy" id="454166"/>
    <lineage>
        <taxon>Bacteria</taxon>
        <taxon>Pseudomonadati</taxon>
        <taxon>Pseudomonadota</taxon>
        <taxon>Gammaproteobacteria</taxon>
        <taxon>Enterobacterales</taxon>
        <taxon>Enterobacteriaceae</taxon>
        <taxon>Salmonella</taxon>
    </lineage>
</organism>
<accession>B5F7F6</accession>
<feature type="chain" id="PRO_1000122159" description="Integration host factor subunit alpha">
    <location>
        <begin position="1"/>
        <end position="99"/>
    </location>
</feature>
<feature type="region of interest" description="Disordered" evidence="2">
    <location>
        <begin position="49"/>
        <end position="75"/>
    </location>
</feature>
<comment type="function">
    <text evidence="1">This protein is one of the two subunits of integration host factor, a specific DNA-binding protein that functions in genetic recombination as well as in transcriptional and translational control.</text>
</comment>
<comment type="subunit">
    <text evidence="1">Heterodimer of an alpha and a beta chain.</text>
</comment>
<comment type="similarity">
    <text evidence="1">Belongs to the bacterial histone-like protein family.</text>
</comment>
<sequence>MALTKAEMSEYLFDKLGLSKRDAKELVELFFEEIRRALENGEQVKLSGFGNFDLRDKNQRPGRNPKTGEDIPITARRVVTFRPGQKLKSRVENASPKEE</sequence>
<evidence type="ECO:0000255" key="1">
    <source>
        <dbReference type="HAMAP-Rule" id="MF_00380"/>
    </source>
</evidence>
<evidence type="ECO:0000256" key="2">
    <source>
        <dbReference type="SAM" id="MobiDB-lite"/>
    </source>
</evidence>
<proteinExistence type="inferred from homology"/>
<gene>
    <name evidence="1" type="primary">ihfA</name>
    <name evidence="1" type="synonym">himA</name>
    <name type="ordered locus">SeAg_B1834</name>
</gene>
<protein>
    <recommendedName>
        <fullName evidence="1">Integration host factor subunit alpha</fullName>
        <shortName evidence="1">IHF-alpha</shortName>
    </recommendedName>
</protein>
<dbReference type="EMBL" id="CP001138">
    <property type="protein sequence ID" value="ACH50805.1"/>
    <property type="molecule type" value="Genomic_DNA"/>
</dbReference>
<dbReference type="RefSeq" id="WP_001229266.1">
    <property type="nucleotide sequence ID" value="NC_011149.1"/>
</dbReference>
<dbReference type="SMR" id="B5F7F6"/>
<dbReference type="GeneID" id="92828695"/>
<dbReference type="KEGG" id="sea:SeAg_B1834"/>
<dbReference type="HOGENOM" id="CLU_105066_1_3_6"/>
<dbReference type="Proteomes" id="UP000008819">
    <property type="component" value="Chromosome"/>
</dbReference>
<dbReference type="GO" id="GO:0005829">
    <property type="term" value="C:cytosol"/>
    <property type="evidence" value="ECO:0007669"/>
    <property type="project" value="TreeGrafter"/>
</dbReference>
<dbReference type="GO" id="GO:0003677">
    <property type="term" value="F:DNA binding"/>
    <property type="evidence" value="ECO:0007669"/>
    <property type="project" value="UniProtKB-UniRule"/>
</dbReference>
<dbReference type="GO" id="GO:0030527">
    <property type="term" value="F:structural constituent of chromatin"/>
    <property type="evidence" value="ECO:0007669"/>
    <property type="project" value="InterPro"/>
</dbReference>
<dbReference type="GO" id="GO:0006310">
    <property type="term" value="P:DNA recombination"/>
    <property type="evidence" value="ECO:0007669"/>
    <property type="project" value="UniProtKB-UniRule"/>
</dbReference>
<dbReference type="GO" id="GO:0009893">
    <property type="term" value="P:positive regulation of metabolic process"/>
    <property type="evidence" value="ECO:0007669"/>
    <property type="project" value="UniProtKB-ARBA"/>
</dbReference>
<dbReference type="GO" id="GO:0006355">
    <property type="term" value="P:regulation of DNA-templated transcription"/>
    <property type="evidence" value="ECO:0007669"/>
    <property type="project" value="UniProtKB-UniRule"/>
</dbReference>
<dbReference type="GO" id="GO:0006417">
    <property type="term" value="P:regulation of translation"/>
    <property type="evidence" value="ECO:0007669"/>
    <property type="project" value="UniProtKB-UniRule"/>
</dbReference>
<dbReference type="CDD" id="cd13835">
    <property type="entry name" value="IHF_A"/>
    <property type="match status" value="1"/>
</dbReference>
<dbReference type="FunFam" id="4.10.520.10:FF:000002">
    <property type="entry name" value="Integration host factor subunit alpha"/>
    <property type="match status" value="1"/>
</dbReference>
<dbReference type="Gene3D" id="4.10.520.10">
    <property type="entry name" value="IHF-like DNA-binding proteins"/>
    <property type="match status" value="1"/>
</dbReference>
<dbReference type="HAMAP" id="MF_00380">
    <property type="entry name" value="IHF_alpha"/>
    <property type="match status" value="1"/>
</dbReference>
<dbReference type="InterPro" id="IPR000119">
    <property type="entry name" value="Hist_DNA-bd"/>
</dbReference>
<dbReference type="InterPro" id="IPR020816">
    <property type="entry name" value="Histone-like_DNA-bd_CS"/>
</dbReference>
<dbReference type="InterPro" id="IPR010992">
    <property type="entry name" value="IHF-like_DNA-bd_dom_sf"/>
</dbReference>
<dbReference type="InterPro" id="IPR005684">
    <property type="entry name" value="IHF_alpha"/>
</dbReference>
<dbReference type="NCBIfam" id="TIGR00987">
    <property type="entry name" value="himA"/>
    <property type="match status" value="1"/>
</dbReference>
<dbReference type="NCBIfam" id="NF001401">
    <property type="entry name" value="PRK00285.1"/>
    <property type="match status" value="1"/>
</dbReference>
<dbReference type="PANTHER" id="PTHR33175">
    <property type="entry name" value="DNA-BINDING PROTEIN HU"/>
    <property type="match status" value="1"/>
</dbReference>
<dbReference type="PANTHER" id="PTHR33175:SF2">
    <property type="entry name" value="INTEGRATION HOST FACTOR SUBUNIT ALPHA"/>
    <property type="match status" value="1"/>
</dbReference>
<dbReference type="Pfam" id="PF00216">
    <property type="entry name" value="Bac_DNA_binding"/>
    <property type="match status" value="1"/>
</dbReference>
<dbReference type="PRINTS" id="PR01727">
    <property type="entry name" value="DNABINDINGHU"/>
</dbReference>
<dbReference type="SMART" id="SM00411">
    <property type="entry name" value="BHL"/>
    <property type="match status" value="1"/>
</dbReference>
<dbReference type="SUPFAM" id="SSF47729">
    <property type="entry name" value="IHF-like DNA-binding proteins"/>
    <property type="match status" value="1"/>
</dbReference>
<dbReference type="PROSITE" id="PS00045">
    <property type="entry name" value="HISTONE_LIKE"/>
    <property type="match status" value="1"/>
</dbReference>
<keyword id="KW-0233">DNA recombination</keyword>
<keyword id="KW-0238">DNA-binding</keyword>
<keyword id="KW-0804">Transcription</keyword>
<keyword id="KW-0805">Transcription regulation</keyword>
<keyword id="KW-0810">Translation regulation</keyword>